<gene>
    <name type="primary">TGFBI</name>
</gene>
<accession>Q95215</accession>
<sequence>MALFVRLLALALALALGPAATLAGPAKSPYQLVLQHSRLRRQQHGPNVCAVQKVIGTNRKYFTNCKQWYQRKICGKSTVISYECCPGYEKVPGERSCPAALPLANLYETLGVVGSTTTQLYTDRTEKLRPEMEGPGRFTIFAPSNEAWASLPAEVLDSLVSNVNIELLNALRYHMVDRRVLTDELKHGMALTSMYQNSKFQIHHYPNGIVTVNCARLLKADHHATNGVVHLIDKVISTVTNNIQQIIEIEDTFETLRAAVAASGLNTLLESDGQFTLLAPTNEAKEKIPTETLNRILGDPEALRDLLNNHILKSAMCAEAIVAGLSMETLEATTLEVGCSGDMLTINGKAIISNKDVLATNGVIHFIDELLIPDSAKTLSELAAGSDVSTAIDLFGQAGLGTHLSGNERLTLLAPLNSVFEEGAPPIDAHTRNLLRNHIIKDQLASKYLYHGQTLDTLGGKKLRVFVYRNSLCIENSCIAAHDKRGRYGTLFTMDRMLTPPSGTVMDVLKGDNRFSMLVAAIQFRRLTETLNREGAYTVFAPTNEAFQALPPGELNKLLGNAKELADILKYHVGEEILVSGGIGTLVRLKSLQGDKLEVSSKNNAVSVNKEPVAESDIMATNGVVYAITSVLQPPANRPQERGDELADSALEIFKQASAFSRASQRSVRLAPVYQRLLERMKH</sequence>
<protein>
    <recommendedName>
        <fullName>Transforming growth factor-beta-induced protein ig-h3</fullName>
        <shortName>Beta ig-h3</shortName>
    </recommendedName>
    <alternativeName>
        <fullName>Kerato-epithelin</fullName>
    </alternativeName>
    <alternativeName>
        <fullName>RGD-containing collagen-associated protein</fullName>
        <shortName>RGD-CAP</shortName>
    </alternativeName>
</protein>
<organism>
    <name type="scientific">Oryctolagus cuniculus</name>
    <name type="common">Rabbit</name>
    <dbReference type="NCBI Taxonomy" id="9986"/>
    <lineage>
        <taxon>Eukaryota</taxon>
        <taxon>Metazoa</taxon>
        <taxon>Chordata</taxon>
        <taxon>Craniata</taxon>
        <taxon>Vertebrata</taxon>
        <taxon>Euteleostomi</taxon>
        <taxon>Mammalia</taxon>
        <taxon>Eutheria</taxon>
        <taxon>Euarchontoglires</taxon>
        <taxon>Glires</taxon>
        <taxon>Lagomorpha</taxon>
        <taxon>Leporidae</taxon>
        <taxon>Oryctolagus</taxon>
    </lineage>
</organism>
<reference key="1">
    <citation type="journal article" date="1997" name="Invest. Ophthalmol. Vis. Sci.">
        <title>Beta-ig. Molecular cloning and in situ hybridization in corneal tissues.</title>
        <authorList>
            <person name="Rawe I.M."/>
            <person name="Zhan Q."/>
            <person name="Burrows R."/>
            <person name="Bennett K."/>
            <person name="Cintron C."/>
        </authorList>
    </citation>
    <scope>NUCLEOTIDE SEQUENCE [MRNA]</scope>
    <scope>TISSUE SPECIFICITY</scope>
    <source>
        <strain>New Zealand white</strain>
        <tissue>Cornea</tissue>
    </source>
</reference>
<evidence type="ECO:0000250" key="1">
    <source>
        <dbReference type="UniProtKB" id="O11780"/>
    </source>
</evidence>
<evidence type="ECO:0000250" key="2">
    <source>
        <dbReference type="UniProtKB" id="Q15582"/>
    </source>
</evidence>
<evidence type="ECO:0000255" key="3"/>
<evidence type="ECO:0000255" key="4">
    <source>
        <dbReference type="PROSITE-ProRule" id="PRU00082"/>
    </source>
</evidence>
<evidence type="ECO:0000255" key="5">
    <source>
        <dbReference type="PROSITE-ProRule" id="PRU00384"/>
    </source>
</evidence>
<evidence type="ECO:0000269" key="6">
    <source>
    </source>
</evidence>
<evidence type="ECO:0000305" key="7"/>
<comment type="function">
    <text evidence="1 2">Plays a role in cell adhesion (By similarity). May play a role in cell-collagen interactions (By similarity).</text>
</comment>
<comment type="subunit">
    <text evidence="1">Binds to type I, II, and IV collagens.</text>
</comment>
<comment type="subcellular location">
    <subcellularLocation>
        <location evidence="2">Secreted</location>
    </subcellularLocation>
    <subcellularLocation>
        <location evidence="2">Secreted</location>
        <location evidence="2">Extracellular space</location>
        <location evidence="2">Extracellular matrix</location>
    </subcellularLocation>
    <text evidence="2">May be associated both with microfibrils and with the cell surface.</text>
</comment>
<comment type="tissue specificity">
    <text evidence="6">Located primarily in the epithelium of normal adult cornea, in fetal stromal cells, and both endothelium- and stroma-derived cells in healing corneal wounds (PubMed:9112985). Not expressed in normal adult endothelium and stroma (PubMed:9112985).</text>
</comment>
<comment type="PTM">
    <text evidence="2">Gamma-carboxylation is controversial. Gamma-carboxyglutamated; gamma-carboxyglutamate residues are formed by vitamin K dependent carboxylation; this may be required for calcium binding. According to a more recent report, does not contain vitamin K-dependent gamma-carboxyglutamate residues.</text>
</comment>
<comment type="PTM">
    <text evidence="2">The EMI domain contains 2 expected intradomain disulfide bridges (Cys-49-Cys85 and Cys-84-Cys-97) and one unusual interdomain disulfide bridge to the second FAS1 domain (Cys-74-Cys-339). This arrangement violates the predicted disulfide bridge pattern of an EMI domain.</text>
</comment>
<comment type="sequence caution" evidence="7">
    <conflict type="frameshift">
        <sequence resource="EMBL-CDS" id="AAB07015"/>
    </conflict>
</comment>
<keyword id="KW-0130">Cell adhesion</keyword>
<keyword id="KW-1015">Disulfide bond</keyword>
<keyword id="KW-0272">Extracellular matrix</keyword>
<keyword id="KW-0301">Gamma-carboxyglutamic acid</keyword>
<keyword id="KW-0597">Phosphoprotein</keyword>
<keyword id="KW-1185">Reference proteome</keyword>
<keyword id="KW-0677">Repeat</keyword>
<keyword id="KW-0964">Secreted</keyword>
<keyword id="KW-0732">Signal</keyword>
<name>BGH3_RABIT</name>
<proteinExistence type="evidence at transcript level"/>
<dbReference type="EMBL" id="U66205">
    <property type="protein sequence ID" value="AAB07015.1"/>
    <property type="status" value="ALT_FRAME"/>
    <property type="molecule type" value="mRNA"/>
</dbReference>
<dbReference type="SMR" id="Q95215"/>
<dbReference type="FunCoup" id="Q95215">
    <property type="interactions" value="47"/>
</dbReference>
<dbReference type="STRING" id="9986.ENSOCUP00000040013"/>
<dbReference type="PaxDb" id="9986-ENSOCUP00000017414"/>
<dbReference type="eggNOG" id="KOG1437">
    <property type="taxonomic scope" value="Eukaryota"/>
</dbReference>
<dbReference type="InParanoid" id="Q95215"/>
<dbReference type="Proteomes" id="UP000001811">
    <property type="component" value="Unplaced"/>
</dbReference>
<dbReference type="GO" id="GO:0031012">
    <property type="term" value="C:extracellular matrix"/>
    <property type="evidence" value="ECO:0007669"/>
    <property type="project" value="TreeGrafter"/>
</dbReference>
<dbReference type="GO" id="GO:0005615">
    <property type="term" value="C:extracellular space"/>
    <property type="evidence" value="ECO:0007669"/>
    <property type="project" value="TreeGrafter"/>
</dbReference>
<dbReference type="GO" id="GO:0050839">
    <property type="term" value="F:cell adhesion molecule binding"/>
    <property type="evidence" value="ECO:0007669"/>
    <property type="project" value="TreeGrafter"/>
</dbReference>
<dbReference type="GO" id="GO:0007155">
    <property type="term" value="P:cell adhesion"/>
    <property type="evidence" value="ECO:0007669"/>
    <property type="project" value="UniProtKB-KW"/>
</dbReference>
<dbReference type="GO" id="GO:0030198">
    <property type="term" value="P:extracellular matrix organization"/>
    <property type="evidence" value="ECO:0007669"/>
    <property type="project" value="TreeGrafter"/>
</dbReference>
<dbReference type="FunFam" id="2.30.180.10:FF:000001">
    <property type="entry name" value="periostin isoform X1"/>
    <property type="match status" value="1"/>
</dbReference>
<dbReference type="FunFam" id="2.30.180.10:FF:000002">
    <property type="entry name" value="periostin isoform X1"/>
    <property type="match status" value="1"/>
</dbReference>
<dbReference type="FunFam" id="2.30.180.10:FF:000003">
    <property type="entry name" value="periostin isoform X1"/>
    <property type="match status" value="1"/>
</dbReference>
<dbReference type="FunFam" id="2.30.180.10:FF:000007">
    <property type="entry name" value="Transforming growth factor-beta-induced protein ig-h3"/>
    <property type="match status" value="1"/>
</dbReference>
<dbReference type="Gene3D" id="2.30.180.10">
    <property type="entry name" value="FAS1 domain"/>
    <property type="match status" value="4"/>
</dbReference>
<dbReference type="InterPro" id="IPR050904">
    <property type="entry name" value="Adhesion/Biosynth-related"/>
</dbReference>
<dbReference type="InterPro" id="IPR011489">
    <property type="entry name" value="EMI_domain"/>
</dbReference>
<dbReference type="InterPro" id="IPR036378">
    <property type="entry name" value="FAS1_dom_sf"/>
</dbReference>
<dbReference type="InterPro" id="IPR000782">
    <property type="entry name" value="FAS1_domain"/>
</dbReference>
<dbReference type="InterPro" id="IPR016666">
    <property type="entry name" value="TGFBI/POSTN"/>
</dbReference>
<dbReference type="PANTHER" id="PTHR10900">
    <property type="entry name" value="PERIOSTIN-RELATED"/>
    <property type="match status" value="1"/>
</dbReference>
<dbReference type="PANTHER" id="PTHR10900:SF82">
    <property type="entry name" value="TRANSFORMING GROWTH FACTOR-BETA-INDUCED PROTEIN IG-H3"/>
    <property type="match status" value="1"/>
</dbReference>
<dbReference type="Pfam" id="PF02469">
    <property type="entry name" value="Fasciclin"/>
    <property type="match status" value="4"/>
</dbReference>
<dbReference type="PIRSF" id="PIRSF016553">
    <property type="entry name" value="BIGH3_OSF2"/>
    <property type="match status" value="1"/>
</dbReference>
<dbReference type="SMART" id="SM00554">
    <property type="entry name" value="FAS1"/>
    <property type="match status" value="4"/>
</dbReference>
<dbReference type="SUPFAM" id="SSF82153">
    <property type="entry name" value="FAS1 domain"/>
    <property type="match status" value="4"/>
</dbReference>
<dbReference type="PROSITE" id="PS51041">
    <property type="entry name" value="EMI"/>
    <property type="match status" value="1"/>
</dbReference>
<dbReference type="PROSITE" id="PS50213">
    <property type="entry name" value="FAS1"/>
    <property type="match status" value="4"/>
</dbReference>
<feature type="signal peptide" evidence="2">
    <location>
        <begin position="1"/>
        <end position="23"/>
    </location>
</feature>
<feature type="chain" id="PRO_0000008771" description="Transforming growth factor-beta-induced protein ig-h3">
    <location>
        <begin position="24"/>
        <end position="683"/>
    </location>
</feature>
<feature type="domain" description="EMI" evidence="5">
    <location>
        <begin position="45"/>
        <end position="99"/>
    </location>
</feature>
<feature type="domain" description="FAS1 1" evidence="4">
    <location>
        <begin position="103"/>
        <end position="236"/>
    </location>
</feature>
<feature type="domain" description="FAS1 2" evidence="4">
    <location>
        <begin position="240"/>
        <end position="371"/>
    </location>
</feature>
<feature type="domain" description="FAS1 3" evidence="4">
    <location>
        <begin position="375"/>
        <end position="498"/>
    </location>
</feature>
<feature type="domain" description="FAS1 4" evidence="4">
    <location>
        <begin position="502"/>
        <end position="632"/>
    </location>
</feature>
<feature type="short sequence motif" description="Cell attachment site" evidence="3">
    <location>
        <begin position="642"/>
        <end position="644"/>
    </location>
</feature>
<feature type="modified residue" description="Phosphoserine" evidence="2">
    <location>
        <position position="37"/>
    </location>
</feature>
<feature type="modified residue" description="S-cysteinyl cysteine" evidence="2">
    <location>
        <position position="65"/>
    </location>
</feature>
<feature type="disulfide bond" evidence="2">
    <location>
        <begin position="49"/>
        <end position="85"/>
    </location>
</feature>
<feature type="disulfide bond" evidence="2">
    <location>
        <begin position="74"/>
        <end position="339"/>
    </location>
</feature>
<feature type="disulfide bond" evidence="2">
    <location>
        <begin position="84"/>
        <end position="97"/>
    </location>
</feature>
<feature type="disulfide bond" evidence="2">
    <location>
        <begin position="214"/>
        <end position="317"/>
    </location>
</feature>
<feature type="disulfide bond" evidence="2">
    <location>
        <begin position="473"/>
        <end position="478"/>
    </location>
</feature>